<feature type="chain" id="PRO_0000038310" description="Latent membrane protein 1">
    <location>
        <begin position="1"/>
        <end position="386"/>
    </location>
</feature>
<feature type="chain" id="PRO_0000038311" description="Protein p25">
    <location>
        <begin position="242"/>
        <end position="386"/>
    </location>
</feature>
<feature type="topological domain" description="Cytoplasmic">
    <location>
        <begin position="1"/>
        <end position="23"/>
    </location>
</feature>
<feature type="transmembrane region" description="Helical" evidence="1">
    <location>
        <begin position="24"/>
        <end position="44"/>
    </location>
</feature>
<feature type="topological domain" description="Extracellular">
    <location>
        <begin position="45"/>
        <end position="51"/>
    </location>
</feature>
<feature type="transmembrane region" description="Helical" evidence="1">
    <location>
        <begin position="52"/>
        <end position="72"/>
    </location>
</feature>
<feature type="topological domain" description="Cytoplasmic">
    <location>
        <begin position="73"/>
        <end position="75"/>
    </location>
</feature>
<feature type="transmembrane region" description="Helical" evidence="1">
    <location>
        <begin position="76"/>
        <end position="96"/>
    </location>
</feature>
<feature type="topological domain" description="Extracellular">
    <location>
        <begin position="97"/>
        <end position="106"/>
    </location>
</feature>
<feature type="transmembrane region" description="Helical" evidence="1">
    <location>
        <begin position="107"/>
        <end position="127"/>
    </location>
</feature>
<feature type="topological domain" description="Cytoplasmic">
    <location>
        <begin position="128"/>
        <end position="139"/>
    </location>
</feature>
<feature type="transmembrane region" description="Helical" evidence="1">
    <location>
        <begin position="140"/>
        <end position="160"/>
    </location>
</feature>
<feature type="topological domain" description="Extracellular">
    <location>
        <begin position="161"/>
        <end position="163"/>
    </location>
</feature>
<feature type="transmembrane region" description="Helical" evidence="1">
    <location>
        <begin position="164"/>
        <end position="184"/>
    </location>
</feature>
<feature type="topological domain" description="Cytoplasmic">
    <location>
        <begin position="185"/>
        <end position="386"/>
    </location>
</feature>
<feature type="region of interest" description="Disordered" evidence="2">
    <location>
        <begin position="194"/>
        <end position="386"/>
    </location>
</feature>
<feature type="region of interest" description="CTAR1">
    <location>
        <begin position="194"/>
        <end position="232"/>
    </location>
</feature>
<feature type="region of interest" description="CTAR2">
    <location>
        <begin position="351"/>
        <end position="386"/>
    </location>
</feature>
<feature type="short sequence motif" description="Interaction with host TRAF proteins">
    <location>
        <begin position="204"/>
        <end position="208"/>
    </location>
</feature>
<feature type="compositionally biased region" description="Basic and acidic residues" evidence="2">
    <location>
        <begin position="210"/>
        <end position="224"/>
    </location>
</feature>
<feature type="compositionally biased region" description="Low complexity" evidence="2">
    <location>
        <begin position="251"/>
        <end position="267"/>
    </location>
</feature>
<feature type="mutagenesis site" description="No effect on ubiquitination and proteasomal degradation." evidence="3">
    <original>K</original>
    <variation>R</variation>
    <location>
        <position position="330"/>
    </location>
</feature>
<sequence>MEHDLERGPPGPRRPPRGPPLSSSLGLALLLLLLALLFWLYIVMSDWTGGALLVLYSFALMLIIIILIIFIFRRDLLCPLGALCILLLMITLLLIALWNLHGQALFLGIVLFIFGCLLVLGIWIYLLEMLWRLGATIWQLLAFFLAFFLDLILLIIALYLQQNWWTLLVDLLWLLLFLAILIWMYYHGQRHSDEHHHDDSLPHPQQATDDSGHESDSNSNEGRHHLLVSGAGDGPPLCSQNLGAPGGGPDNGPQDPDNTDDNGPQDPDNTDDNGPHDPLPQDPDNTDDNGPQDPDNTDDNGPHDPLPHSPSDSAGNDGGPPQLTEEVENKGGDQGPPLMTDGGGGHSHDSGHGGGDPHLPTLLLGSSGSGGDDDDPHGPVQLSYYD</sequence>
<keyword id="KW-0002">3D-structure</keyword>
<keyword id="KW-1074">Activation of host NF-kappa-B by virus</keyword>
<keyword id="KW-1032">Host cell membrane</keyword>
<keyword id="KW-1043">Host membrane</keyword>
<keyword id="KW-0945">Host-virus interaction</keyword>
<keyword id="KW-1090">Inhibition of host innate immune response by virus</keyword>
<keyword id="KW-1114">Inhibition of host interferon signaling pathway by virus</keyword>
<keyword id="KW-1113">Inhibition of host RLR pathway by virus</keyword>
<keyword id="KW-1110">Inhibition of host TRAFs by virus</keyword>
<keyword id="KW-1112">Inhibition of host TYK2 by virus</keyword>
<keyword id="KW-0922">Interferon antiviral system evasion</keyword>
<keyword id="KW-0472">Membrane</keyword>
<keyword id="KW-0553">Oncogene</keyword>
<keyword id="KW-0597">Phosphoprotein</keyword>
<keyword id="KW-1185">Reference proteome</keyword>
<keyword id="KW-0812">Transmembrane</keyword>
<keyword id="KW-1133">Transmembrane helix</keyword>
<keyword id="KW-0832">Ubl conjugation</keyword>
<keyword id="KW-0899">Viral immunoevasion</keyword>
<reference key="1">
    <citation type="journal article" date="1984" name="J. Virol.">
        <title>Nucleotide sequence of an mRNA transcribed in latent growth-transforming virus infection indicates that it may encode a membrane protein.</title>
        <authorList>
            <person name="Fennewald S."/>
            <person name="van Santen V."/>
            <person name="Kieff E."/>
        </authorList>
    </citation>
    <scope>NUCLEOTIDE SEQUENCE [GENOMIC DNA]</scope>
</reference>
<reference key="2">
    <citation type="journal article" date="1985" name="J. Virol.">
        <title>Two related but differentially expressed potential membrane proteins encoded by the EcoRI Dhet region of Epstein-Barr virus B95-8.</title>
        <authorList>
            <person name="Hudson G.S."/>
            <person name="Farrell P.J."/>
            <person name="Barrell B.G."/>
        </authorList>
    </citation>
    <scope>NUCLEOTIDE SEQUENCE [GENOMIC DNA]</scope>
</reference>
<reference key="3">
    <citation type="journal article" date="1984" name="Nature">
        <title>DNA sequence and expression of the B95-8 Epstein-Barr virus genome.</title>
        <authorList>
            <person name="Baer R."/>
            <person name="Bankier A.T."/>
            <person name="Biggin M.D."/>
            <person name="Deininger P.L."/>
            <person name="Farrell P.J."/>
            <person name="Gibson T.J."/>
            <person name="Hatfull G."/>
            <person name="Hudson G.S."/>
            <person name="Satchwell S.C."/>
            <person name="Seguin C."/>
            <person name="Tuffnell P.S."/>
            <person name="Barrell B.G."/>
        </authorList>
    </citation>
    <scope>NUCLEOTIDE SEQUENCE [LARGE SCALE GENOMIC DNA]</scope>
</reference>
<reference key="4">
    <citation type="journal article" date="2003" name="Virology">
        <title>Updated Epstein-Barr virus (EBV) DNA sequence and analysis of a promoter for the BART (CST, BARF0) RNAs of EBV.</title>
        <authorList>
            <person name="de Jesus O."/>
            <person name="Smith P.R."/>
            <person name="Spender L.C."/>
            <person name="Elgueta Karstegl C."/>
            <person name="Niller H.H."/>
            <person name="Huang D."/>
            <person name="Farrell P.J."/>
        </authorList>
    </citation>
    <scope>GENOME REANNOTATION</scope>
</reference>
<reference key="5">
    <citation type="journal article" date="1987" name="J. Virol.">
        <title>Posttranslational processing of an Epstein-Barr virus-encoded membrane protein expressed in cells transformed by Epstein-Barr virus.</title>
        <authorList>
            <person name="Baichwal V.R."/>
            <person name="Sudgen B."/>
        </authorList>
    </citation>
    <scope>CHARACTERIZATION</scope>
</reference>
<reference key="6">
    <citation type="journal article" date="1988" name="Oncogene">
        <title>Transformation of Balb 3T3 cells by the BNLF-1 gene of Epstein-Barr virus.</title>
        <authorList>
            <person name="Baichwal V.R."/>
            <person name="Sudgen B."/>
        </authorList>
    </citation>
    <scope>TRANSFORMING PROPERTIES</scope>
</reference>
<reference key="7">
    <citation type="journal article" date="1990" name="J. Virol.">
        <title>Processing of the Epstein-Barr virus-encoded latent membrane protein p63/LMP.</title>
        <authorList>
            <person name="Moorthy R."/>
            <person name="Thorley-Lawson D.A."/>
        </authorList>
    </citation>
    <scope>PROTEOLYTIC PROCESSING</scope>
</reference>
<reference key="8">
    <citation type="journal article" date="1995" name="Oncogene">
        <title>The Epstein-Barr virus latent membrane protein-1 (LMP1) mediates activation of NF-kappa B and cell surface phenotype via two effector regions in its carboxy-terminal cytoplasmic domain.</title>
        <authorList>
            <person name="Huen D.S."/>
            <person name="Henderson S.A."/>
            <person name="Croom-Carter D."/>
            <person name="Rowe M."/>
        </authorList>
    </citation>
    <scope>DOMAIN CTAR1 AND CTAR2</scope>
</reference>
<reference key="9">
    <citation type="journal article" date="2000" name="J. Biol. Chem.">
        <title>Degradation of the epstein-barr virus latent membrane protein 1 (LMP1) by the ubiquitin-proteasome pathway. Targeting via ubiquitination of the N-terminal residue.</title>
        <authorList>
            <person name="Aviel S."/>
            <person name="Winberg G."/>
            <person name="Massucci M."/>
            <person name="Ciechanover A."/>
        </authorList>
    </citation>
    <scope>SUBCELLULAR LOCATION</scope>
    <scope>MUTAGENESIS OF LYS-330</scope>
    <scope>UBIQUITINATION</scope>
</reference>
<reference key="10">
    <citation type="journal article" date="2006" name="Mol. Cell. Biol.">
        <title>BS69, a specific adaptor in the latent membrane protein 1-mediated c-Jun N-terminal kinase pathway.</title>
        <authorList>
            <person name="Wan J."/>
            <person name="Zhang W."/>
            <person name="Wu L."/>
            <person name="Bai T."/>
            <person name="Zhang M."/>
            <person name="Lo K.W."/>
            <person name="Chui Y.L."/>
            <person name="Cui Y."/>
            <person name="Tao Q."/>
            <person name="Yamamoto M."/>
            <person name="Akira S."/>
            <person name="Wu Z."/>
        </authorList>
    </citation>
    <scope>INTERACTION WITH HOST PROTEIN ZMYND11</scope>
</reference>
<reference key="11">
    <citation type="journal article" date="2006" name="J. Virol.">
        <title>The Epstein-Barr virus-encoded LMP-1 oncoprotein negatively affects Tyk2 phosphorylation and interferon signaling in human B cells.</title>
        <authorList>
            <person name="Geiger T.R."/>
            <person name="Martin J.M."/>
        </authorList>
    </citation>
    <scope>FUNCTION</scope>
    <scope>INTERACTION WITH HOST TYK2</scope>
</reference>
<reference key="12">
    <citation type="journal article" date="2008" name="Proc. Natl. Acad. Sci. U.S.A.">
        <title>IRF7 activation by Epstein-Barr virus latent membrane protein 1 requires localization at activation sites and TRAF6, but not TRAF2 or TRAF3.</title>
        <authorList>
            <person name="Song Y.J."/>
            <person name="Izumi K.M."/>
            <person name="Shinners N.P."/>
            <person name="Gewurz B.E."/>
            <person name="Kieff E."/>
        </authorList>
    </citation>
    <scope>FUNCTION</scope>
    <scope>INTERACTION WITH HOST IRF7</scope>
</reference>
<reference key="13">
    <citation type="journal article" date="2009" name="FEBS Lett.">
        <title>BS69 negatively regulates the canonical NF-kappaB activation induced by Epstein-Barr virus-derived LMP1.</title>
        <authorList>
            <person name="Ikeda O."/>
            <person name="Sekine Y."/>
            <person name="Mizushima A."/>
            <person name="Oritani K."/>
            <person name="Yasui T."/>
            <person name="Fujimuro M."/>
            <person name="Muromoto R."/>
            <person name="Nanbo A."/>
            <person name="Matsuda T."/>
        </authorList>
    </citation>
    <scope>INTERACTION WITH HOST PROTEIN ZMYND11</scope>
</reference>
<reference key="14">
    <citation type="journal article" date="2010" name="FEBS Lett.">
        <title>BS69 cooperates with TRAF3 in the regulation of Epstein-Barr virus-derived LMP1/CTAR1-induced NF-kappaB activation.</title>
        <authorList>
            <person name="Ikeda O."/>
            <person name="Miyasaka Y."/>
            <person name="Yoshida R."/>
            <person name="Mizushima A."/>
            <person name="Oritani K."/>
            <person name="Sekine Y."/>
            <person name="Kuroda M."/>
            <person name="Yasui T."/>
            <person name="Fujimuro M."/>
            <person name="Muromoto R."/>
            <person name="Nanbo A."/>
            <person name="Matsuda T."/>
        </authorList>
    </citation>
    <scope>INTERACTION WITH HOST PROTEIN ZMYND11</scope>
</reference>
<reference key="15">
    <citation type="journal article" date="2011" name="J. Virol.">
        <title>Epstein-Barr virus latent membrane protein 1 (LMP1) C-terminal-activating region 3 contributes to LMP1-mediated cellular migration via its interaction with Ubc9.</title>
        <authorList>
            <person name="Bentz G.L."/>
            <person name="Whitehurst C.B."/>
            <person name="Pagano J.S."/>
        </authorList>
    </citation>
    <scope>FUNCTION</scope>
    <scope>INTERACTION WITH HOST UBE2I</scope>
</reference>
<reference key="16">
    <citation type="journal article" date="2012" name="J. Virol.">
        <title>Epstein-Barr virus latent membrane protein 1 regulates the function of interferon regulatory factor 7 by inducing its sumoylation.</title>
        <authorList>
            <person name="Bentz G.L."/>
            <person name="Shackelford J."/>
            <person name="Pagano J.S."/>
        </authorList>
    </citation>
    <scope>FUNCTION</scope>
</reference>
<reference key="17">
    <citation type="journal article" date="2013" name="Viruses">
        <title>NF-kappaB and IRF7 pathway activation by Epstein-Barr virus Latent Membrane Protein 1.</title>
        <authorList>
            <person name="Ersing I."/>
            <person name="Bernhardt K."/>
            <person name="Gewurz B.E."/>
        </authorList>
    </citation>
    <scope>REVIEW ON FUNCTION</scope>
</reference>
<reference key="18">
    <citation type="journal article" date="2019" name="Sci. Rep.">
        <title>Epstein-Barr Virus Latent Membrane Protein-1 Induces the Expression of SUMO-1 and SUMO-2/3 in LMP1-positive Lymphomas and Cells.</title>
        <authorList>
            <person name="Salahuddin S."/>
            <person name="Fath E.K."/>
            <person name="Biel N."/>
            <person name="Ray A."/>
            <person name="Moss C.R."/>
            <person name="Patel A."/>
            <person name="Patel S."/>
            <person name="Hilding L."/>
            <person name="Varn M."/>
            <person name="Ross T."/>
            <person name="Cramblet W.T."/>
            <person name="Lowrey A."/>
            <person name="Pagano J.S."/>
            <person name="Shackelford J."/>
            <person name="Bentz G.L."/>
        </authorList>
    </citation>
    <scope>FUNCTION</scope>
</reference>
<reference key="19">
    <citation type="journal article" date="2002" name="Proc. Natl. Acad. Sci. U.S.A.">
        <title>Natural beta-sheet proteins use negative design to avoid edge-to-edge aggregation.</title>
        <authorList>
            <person name="Richardson J.S."/>
            <person name="Richardson D.C."/>
        </authorList>
    </citation>
    <scope>X-RAY CRYSTALLOGRAPHY (2.0 ANGSTROMS) OF 204-210</scope>
</reference>
<protein>
    <recommendedName>
        <fullName>Latent membrane protein 1</fullName>
        <shortName>LMP-1</shortName>
    </recommendedName>
    <alternativeName>
        <fullName>Protein p63</fullName>
    </alternativeName>
    <component>
        <recommendedName>
            <fullName>Protein p25</fullName>
        </recommendedName>
    </component>
</protein>
<gene>
    <name type="primary">LMP1</name>
    <name type="ORF">BNLF1</name>
</gene>
<dbReference type="EMBL" id="X01995">
    <property type="protein sequence ID" value="CAA26023.1"/>
    <property type="molecule type" value="Genomic_DNA"/>
</dbReference>
<dbReference type="EMBL" id="K02165">
    <property type="protein sequence ID" value="AAA45888.1"/>
    <property type="molecule type" value="Genomic_DNA"/>
</dbReference>
<dbReference type="EMBL" id="V01555">
    <property type="status" value="NOT_ANNOTATED_CDS"/>
    <property type="molecule type" value="Genomic_DNA"/>
</dbReference>
<dbReference type="EMBL" id="AJ507799">
    <property type="protein sequence ID" value="CAD53472.1"/>
    <property type="molecule type" value="Genomic_DNA"/>
</dbReference>
<dbReference type="PIR" id="D43045">
    <property type="entry name" value="QQBE50"/>
</dbReference>
<dbReference type="PDB" id="1CZY">
    <property type="method" value="X-ray"/>
    <property type="resolution" value="2.00 A"/>
    <property type="chains" value="D/E=204-210"/>
</dbReference>
<dbReference type="PDBsum" id="1CZY"/>
<dbReference type="SMR" id="P03230"/>
<dbReference type="BioGRID" id="971792">
    <property type="interactions" value="12"/>
</dbReference>
<dbReference type="DIP" id="DIP-29603N"/>
<dbReference type="DIP" id="DIP-43767N"/>
<dbReference type="ELM" id="P03230"/>
<dbReference type="IntAct" id="P03230">
    <property type="interactions" value="15"/>
</dbReference>
<dbReference type="MINT" id="P03230"/>
<dbReference type="BindingDB" id="P03230"/>
<dbReference type="ChEMBL" id="CHEMBL1795089"/>
<dbReference type="TCDB" id="9.B.387.1.1">
    <property type="family name" value="the viral latent membrane protein (vlmp) family"/>
</dbReference>
<dbReference type="SwissPalm" id="P03230"/>
<dbReference type="ABCD" id="P03230">
    <property type="antibodies" value="11 sequenced antibodies"/>
</dbReference>
<dbReference type="DNASU" id="3783750"/>
<dbReference type="KEGG" id="vg:3783750"/>
<dbReference type="SIGNOR" id="P03230"/>
<dbReference type="EvolutionaryTrace" id="P03230"/>
<dbReference type="PRO" id="PR:P03230"/>
<dbReference type="Proteomes" id="UP000153037">
    <property type="component" value="Segment"/>
</dbReference>
<dbReference type="GO" id="GO:0033644">
    <property type="term" value="C:host cell membrane"/>
    <property type="evidence" value="ECO:0000314"/>
    <property type="project" value="CACAO"/>
</dbReference>
<dbReference type="GO" id="GO:0020002">
    <property type="term" value="C:host cell plasma membrane"/>
    <property type="evidence" value="ECO:0007669"/>
    <property type="project" value="UniProtKB-SubCell"/>
</dbReference>
<dbReference type="GO" id="GO:0016020">
    <property type="term" value="C:membrane"/>
    <property type="evidence" value="ECO:0007669"/>
    <property type="project" value="UniProtKB-KW"/>
</dbReference>
<dbReference type="GO" id="GO:0085033">
    <property type="term" value="P:symbiont-mediated activation of host NF-kappaB cascade"/>
    <property type="evidence" value="ECO:0007669"/>
    <property type="project" value="UniProtKB-KW"/>
</dbReference>
<dbReference type="GO" id="GO:0039574">
    <property type="term" value="P:symbiont-mediated suppression of host JAK-STAT cascade via inhibition of host TYK2 activity"/>
    <property type="evidence" value="ECO:0007669"/>
    <property type="project" value="UniProtKB-KW"/>
</dbReference>
<dbReference type="GO" id="GO:0039527">
    <property type="term" value="P:symbiont-mediated suppression of host TRAF-mediated signal transduction"/>
    <property type="evidence" value="ECO:0007669"/>
    <property type="project" value="UniProtKB-KW"/>
</dbReference>
<dbReference type="GO" id="GO:0039502">
    <property type="term" value="P:symbiont-mediated suppression of host type I interferon-mediated signaling pathway"/>
    <property type="evidence" value="ECO:0007669"/>
    <property type="project" value="UniProtKB-KW"/>
</dbReference>
<dbReference type="GO" id="GO:0019087">
    <property type="term" value="P:symbiont-mediated transformation of host cell"/>
    <property type="evidence" value="ECO:0007669"/>
    <property type="project" value="InterPro"/>
</dbReference>
<dbReference type="InterPro" id="IPR007961">
    <property type="entry name" value="Herpes_LMP1"/>
</dbReference>
<dbReference type="Pfam" id="PF05297">
    <property type="entry name" value="Herpes_LMP1"/>
    <property type="match status" value="1"/>
</dbReference>
<organism>
    <name type="scientific">Epstein-Barr virus (strain B95-8)</name>
    <name type="common">HHV-4</name>
    <name type="synonym">Human herpesvirus 4</name>
    <dbReference type="NCBI Taxonomy" id="10377"/>
    <lineage>
        <taxon>Viruses</taxon>
        <taxon>Duplodnaviria</taxon>
        <taxon>Heunggongvirae</taxon>
        <taxon>Peploviricota</taxon>
        <taxon>Herviviricetes</taxon>
        <taxon>Herpesvirales</taxon>
        <taxon>Orthoherpesviridae</taxon>
        <taxon>Gammaherpesvirinae</taxon>
        <taxon>Lymphocryptovirus</taxon>
        <taxon>Lymphocryptovirus humangamma4</taxon>
        <taxon>Epstein-Barr virus (strain GD1)</taxon>
    </lineage>
</organism>
<evidence type="ECO:0000255" key="1"/>
<evidence type="ECO:0000256" key="2">
    <source>
        <dbReference type="SAM" id="MobiDB-lite"/>
    </source>
</evidence>
<evidence type="ECO:0000269" key="3">
    <source>
    </source>
</evidence>
<evidence type="ECO:0000269" key="4">
    <source>
    </source>
</evidence>
<evidence type="ECO:0000269" key="5">
    <source>
    </source>
</evidence>
<evidence type="ECO:0000269" key="6">
    <source>
    </source>
</evidence>
<evidence type="ECO:0000269" key="7">
    <source>
    </source>
</evidence>
<evidence type="ECO:0000269" key="8">
    <source>
    </source>
</evidence>
<evidence type="ECO:0000269" key="9">
    <source>
    </source>
</evidence>
<evidence type="ECO:0000269" key="10">
    <source>
    </source>
</evidence>
<evidence type="ECO:0000269" key="11">
    <source>
    </source>
</evidence>
<evidence type="ECO:0000269" key="12">
    <source>
    </source>
</evidence>
<evidence type="ECO:0000305" key="13"/>
<proteinExistence type="evidence at protein level"/>
<accession>P03230</accession>
<accession>Q777A4</accession>
<organismHost>
    <name type="scientific">Homo sapiens</name>
    <name type="common">Human</name>
    <dbReference type="NCBI Taxonomy" id="9606"/>
</organismHost>
<comment type="function">
    <text evidence="5 6 9 10 11">Acts as a CD40 functional homolog to prevent apoptosis of infected B-lymphocytes and drive their proliferation. Functions as a constitutively active tumor necrosis factor receptor that induces the activation of several signaling pathways, including those of the NF-kappa-B family. LMP1 signaling leads to up-regulation of antiapoptotic proteins and provide growth signals in latently infected cells. Interacts with host UBE2I and subsequently affects the sumoylation state of several cellular proteins. For example, induces the sumoylation of host IRF7 thereby limiting its transcriptional activity and modulating the activation of innate immune responses. Also inhibits host IFN-alpha-stimulated STAT2 nuclear translocation and interferon-stimulated response element transcriptional activity by interacting with and inhibiting host TYK2. Induces SUMO expression during viral latency thereby dysregulating the host sumoylation processes (PubMed:30659232).</text>
</comment>
<comment type="subunit">
    <text evidence="4 5 6 7 8 9">Interacts (via PXQXT motif) with host tumor necrosis factor receptor-associated factor (TRAF) proteins TRAF1, TRAF2, TRAF3 and TRAF5. Interacts with human protein ZMYND11; leading to negatively regulate NF-kappa-B activation. Interacts with host UBE2I; this interaction induces the sumoylation of various cellular proteins (PubMed:21795333). Interacts with host IRF7. Interacts with host TYK2.</text>
</comment>
<comment type="interaction">
    <interactant intactId="EBI-6973030">
        <id>P03230</id>
    </interactant>
    <interactant intactId="EBI-81266">
        <id>O14920</id>
        <label>IKBKB</label>
    </interactant>
    <organismsDiffer>true</organismsDiffer>
    <experiments>2</experiments>
</comment>
<comment type="interaction">
    <interactant intactId="EBI-6973030">
        <id>P03230</id>
    </interactant>
    <interactant intactId="EBI-8850881">
        <id>Q92985-1</id>
        <label>IRF7</label>
    </interactant>
    <organismsDiffer>true</organismsDiffer>
    <experiments>5</experiments>
</comment>
<comment type="interaction">
    <interactant intactId="EBI-6973030">
        <id>P03230</id>
    </interactant>
    <interactant intactId="EBI-712367">
        <id>Q9UI14</id>
        <label>RABAC1</label>
    </interactant>
    <organismsDiffer>true</organismsDiffer>
    <experiments>9</experiments>
</comment>
<comment type="interaction">
    <interactant intactId="EBI-6973030">
        <id>P03230</id>
    </interactant>
    <interactant intactId="EBI-1051794">
        <id>Q9UKE5</id>
        <label>TNIK</label>
    </interactant>
    <organismsDiffer>true</organismsDiffer>
    <experiments>7</experiments>
</comment>
<comment type="interaction">
    <interactant intactId="EBI-6973030">
        <id>P03230</id>
    </interactant>
    <interactant intactId="EBI-359215">
        <id>Q15628</id>
        <label>TRADD</label>
    </interactant>
    <organismsDiffer>true</organismsDiffer>
    <experiments>4</experiments>
</comment>
<comment type="interaction">
    <interactant intactId="EBI-6973030">
        <id>P03230</id>
    </interactant>
    <interactant intactId="EBI-80168">
        <id>P63279</id>
        <label>UBE2I</label>
    </interactant>
    <organismsDiffer>true</organismsDiffer>
    <experiments>5</experiments>
</comment>
<comment type="interaction">
    <interactant intactId="EBI-6973030">
        <id>P03230</id>
    </interactant>
    <interactant intactId="EBI-2623509">
        <id>Q15326</id>
        <label>ZMYND11</label>
    </interactant>
    <organismsDiffer>true</organismsDiffer>
    <experiments>3</experiments>
</comment>
<comment type="subcellular location">
    <subcellularLocation>
        <location evidence="3">Host cell membrane</location>
        <topology evidence="3">Multi-pass membrane protein</topology>
    </subcellularLocation>
</comment>
<comment type="domain">
    <text evidence="12">Two regions, C-terminal-activating region 1 (CTAR1) and CTAR2, have been identified within the cytoplasmic carboxy terminal domain that activates NF-kappa-B.</text>
</comment>
<comment type="PTM">
    <text evidence="3">Ubiquitinated on the N-terminus.</text>
</comment>
<comment type="similarity">
    <text evidence="13">Belongs to the herpesviridae LMP-1 family.</text>
</comment>
<name>LMP1_EBVB9</name>